<comment type="function">
    <text evidence="1">Involved in the biosynthesis of branched-chain amino acids (BCAA). Catalyzes an alkyl-migration followed by a ketol-acid reduction of (S)-2-acetolactate (S2AL) to yield (R)-2,3-dihydroxy-isovalerate. In the isomerase reaction, S2AL is rearranged via a Mg-dependent methyl migration to produce 3-hydroxy-3-methyl-2-ketobutyrate (HMKB). In the reductase reaction, this 2-ketoacid undergoes a metal-dependent reduction by NADPH to yield (R)-2,3-dihydroxy-isovalerate.</text>
</comment>
<comment type="catalytic activity">
    <reaction evidence="1">
        <text>(2R)-2,3-dihydroxy-3-methylbutanoate + NADP(+) = (2S)-2-acetolactate + NADPH + H(+)</text>
        <dbReference type="Rhea" id="RHEA:22068"/>
        <dbReference type="ChEBI" id="CHEBI:15378"/>
        <dbReference type="ChEBI" id="CHEBI:49072"/>
        <dbReference type="ChEBI" id="CHEBI:57783"/>
        <dbReference type="ChEBI" id="CHEBI:58349"/>
        <dbReference type="ChEBI" id="CHEBI:58476"/>
        <dbReference type="EC" id="1.1.1.86"/>
    </reaction>
</comment>
<comment type="catalytic activity">
    <reaction evidence="1">
        <text>(2R,3R)-2,3-dihydroxy-3-methylpentanoate + NADP(+) = (S)-2-ethyl-2-hydroxy-3-oxobutanoate + NADPH + H(+)</text>
        <dbReference type="Rhea" id="RHEA:13493"/>
        <dbReference type="ChEBI" id="CHEBI:15378"/>
        <dbReference type="ChEBI" id="CHEBI:49256"/>
        <dbReference type="ChEBI" id="CHEBI:49258"/>
        <dbReference type="ChEBI" id="CHEBI:57783"/>
        <dbReference type="ChEBI" id="CHEBI:58349"/>
        <dbReference type="EC" id="1.1.1.86"/>
    </reaction>
</comment>
<comment type="cofactor">
    <cofactor evidence="1">
        <name>Mg(2+)</name>
        <dbReference type="ChEBI" id="CHEBI:18420"/>
    </cofactor>
    <text evidence="1">Binds 2 magnesium ions per subunit.</text>
</comment>
<comment type="pathway">
    <text evidence="1">Amino-acid biosynthesis; L-isoleucine biosynthesis; L-isoleucine from 2-oxobutanoate: step 2/4.</text>
</comment>
<comment type="pathway">
    <text evidence="1">Amino-acid biosynthesis; L-valine biosynthesis; L-valine from pyruvate: step 2/4.</text>
</comment>
<comment type="similarity">
    <text evidence="1">Belongs to the ketol-acid reductoisomerase family.</text>
</comment>
<protein>
    <recommendedName>
        <fullName evidence="1">Ketol-acid reductoisomerase (NADP(+))</fullName>
        <shortName evidence="1">KARI</shortName>
        <ecNumber evidence="1">1.1.1.86</ecNumber>
    </recommendedName>
    <alternativeName>
        <fullName evidence="1">Acetohydroxy-acid isomeroreductase</fullName>
        <shortName evidence="1">AHIR</shortName>
    </alternativeName>
    <alternativeName>
        <fullName evidence="1">Alpha-keto-beta-hydroxylacyl reductoisomerase</fullName>
    </alternativeName>
    <alternativeName>
        <fullName evidence="1">Ketol-acid reductoisomerase type 1</fullName>
    </alternativeName>
    <alternativeName>
        <fullName evidence="1">Ketol-acid reductoisomerase type I</fullName>
    </alternativeName>
</protein>
<sequence length="334" mass="37014">MTTVYYDQDVKTDALQGKKIAVVGYGSQGHAHAQNLKDNGYDVVIGIRPGRSFDKAKEDGFDVFPVAEAVKQADVIMVLLPDEIQGDVYKNEIEPNLEKHNALAFAHGFNIHFGVIQPPADVDVFLVAPKGPGHLVRRTFVEGSAVPSLFGIQQDASGQARNIALSYAKGIGATRAGVIETTFKEETETDLFGEQAVLCGGVSKLIQSGFETLVEAGYQPELAYFEVLHEMKLIVDLMYEGGMENVRYSISNTAEFGDYVSGPRVITPDVKENMKAVLTDIQNGNFSNRFIEDNKNGFKEFYKLREEQHGHQIEKVGRELREMMPFIKSKSIEK</sequence>
<name>ILVC_STAAN</name>
<proteinExistence type="inferred from homology"/>
<feature type="chain" id="PRO_0000151357" description="Ketol-acid reductoisomerase (NADP(+))">
    <location>
        <begin position="1"/>
        <end position="334"/>
    </location>
</feature>
<feature type="domain" description="KARI N-terminal Rossmann" evidence="2">
    <location>
        <begin position="1"/>
        <end position="181"/>
    </location>
</feature>
<feature type="domain" description="KARI C-terminal knotted" evidence="3">
    <location>
        <begin position="182"/>
        <end position="327"/>
    </location>
</feature>
<feature type="active site" evidence="1">
    <location>
        <position position="107"/>
    </location>
</feature>
<feature type="binding site" evidence="1">
    <location>
        <begin position="25"/>
        <end position="28"/>
    </location>
    <ligand>
        <name>NADP(+)</name>
        <dbReference type="ChEBI" id="CHEBI:58349"/>
    </ligand>
</feature>
<feature type="binding site" evidence="1">
    <location>
        <position position="48"/>
    </location>
    <ligand>
        <name>NADP(+)</name>
        <dbReference type="ChEBI" id="CHEBI:58349"/>
    </ligand>
</feature>
<feature type="binding site" evidence="1">
    <location>
        <position position="52"/>
    </location>
    <ligand>
        <name>NADP(+)</name>
        <dbReference type="ChEBI" id="CHEBI:58349"/>
    </ligand>
</feature>
<feature type="binding site" evidence="1">
    <location>
        <begin position="82"/>
        <end position="85"/>
    </location>
    <ligand>
        <name>NADP(+)</name>
        <dbReference type="ChEBI" id="CHEBI:58349"/>
    </ligand>
</feature>
<feature type="binding site" evidence="1">
    <location>
        <position position="133"/>
    </location>
    <ligand>
        <name>NADP(+)</name>
        <dbReference type="ChEBI" id="CHEBI:58349"/>
    </ligand>
</feature>
<feature type="binding site" evidence="1">
    <location>
        <position position="190"/>
    </location>
    <ligand>
        <name>Mg(2+)</name>
        <dbReference type="ChEBI" id="CHEBI:18420"/>
        <label>1</label>
    </ligand>
</feature>
<feature type="binding site" evidence="1">
    <location>
        <position position="190"/>
    </location>
    <ligand>
        <name>Mg(2+)</name>
        <dbReference type="ChEBI" id="CHEBI:18420"/>
        <label>2</label>
    </ligand>
</feature>
<feature type="binding site" evidence="1">
    <location>
        <position position="194"/>
    </location>
    <ligand>
        <name>Mg(2+)</name>
        <dbReference type="ChEBI" id="CHEBI:18420"/>
        <label>1</label>
    </ligand>
</feature>
<feature type="binding site" evidence="1">
    <location>
        <position position="226"/>
    </location>
    <ligand>
        <name>Mg(2+)</name>
        <dbReference type="ChEBI" id="CHEBI:18420"/>
        <label>2</label>
    </ligand>
</feature>
<feature type="binding site" evidence="1">
    <location>
        <position position="230"/>
    </location>
    <ligand>
        <name>Mg(2+)</name>
        <dbReference type="ChEBI" id="CHEBI:18420"/>
        <label>2</label>
    </ligand>
</feature>
<feature type="binding site" evidence="1">
    <location>
        <position position="251"/>
    </location>
    <ligand>
        <name>substrate</name>
    </ligand>
</feature>
<evidence type="ECO:0000255" key="1">
    <source>
        <dbReference type="HAMAP-Rule" id="MF_00435"/>
    </source>
</evidence>
<evidence type="ECO:0000255" key="2">
    <source>
        <dbReference type="PROSITE-ProRule" id="PRU01197"/>
    </source>
</evidence>
<evidence type="ECO:0000255" key="3">
    <source>
        <dbReference type="PROSITE-ProRule" id="PRU01198"/>
    </source>
</evidence>
<dbReference type="EC" id="1.1.1.86" evidence="1"/>
<dbReference type="EMBL" id="BA000018">
    <property type="protein sequence ID" value="BAB43143.1"/>
    <property type="molecule type" value="Genomic_DNA"/>
</dbReference>
<dbReference type="PIR" id="F89997">
    <property type="entry name" value="F89997"/>
</dbReference>
<dbReference type="RefSeq" id="WP_000214552.1">
    <property type="nucleotide sequence ID" value="NC_002745.2"/>
</dbReference>
<dbReference type="SMR" id="P65152"/>
<dbReference type="EnsemblBacteria" id="BAB43143">
    <property type="protein sequence ID" value="BAB43143"/>
    <property type="gene ID" value="BAB43143"/>
</dbReference>
<dbReference type="KEGG" id="sau:SA1861"/>
<dbReference type="HOGENOM" id="CLU_033821_0_1_9"/>
<dbReference type="UniPathway" id="UPA00047">
    <property type="reaction ID" value="UER00056"/>
</dbReference>
<dbReference type="UniPathway" id="UPA00049">
    <property type="reaction ID" value="UER00060"/>
</dbReference>
<dbReference type="GO" id="GO:0005829">
    <property type="term" value="C:cytosol"/>
    <property type="evidence" value="ECO:0007669"/>
    <property type="project" value="TreeGrafter"/>
</dbReference>
<dbReference type="GO" id="GO:0004455">
    <property type="term" value="F:ketol-acid reductoisomerase activity"/>
    <property type="evidence" value="ECO:0007669"/>
    <property type="project" value="UniProtKB-UniRule"/>
</dbReference>
<dbReference type="GO" id="GO:0000287">
    <property type="term" value="F:magnesium ion binding"/>
    <property type="evidence" value="ECO:0007669"/>
    <property type="project" value="UniProtKB-UniRule"/>
</dbReference>
<dbReference type="GO" id="GO:0050661">
    <property type="term" value="F:NADP binding"/>
    <property type="evidence" value="ECO:0007669"/>
    <property type="project" value="InterPro"/>
</dbReference>
<dbReference type="GO" id="GO:0009097">
    <property type="term" value="P:isoleucine biosynthetic process"/>
    <property type="evidence" value="ECO:0007669"/>
    <property type="project" value="UniProtKB-UniRule"/>
</dbReference>
<dbReference type="GO" id="GO:0009099">
    <property type="term" value="P:L-valine biosynthetic process"/>
    <property type="evidence" value="ECO:0007669"/>
    <property type="project" value="UniProtKB-UniRule"/>
</dbReference>
<dbReference type="FunFam" id="3.40.50.720:FF:000023">
    <property type="entry name" value="Ketol-acid reductoisomerase (NADP(+))"/>
    <property type="match status" value="1"/>
</dbReference>
<dbReference type="Gene3D" id="6.10.240.10">
    <property type="match status" value="1"/>
</dbReference>
<dbReference type="Gene3D" id="3.40.50.720">
    <property type="entry name" value="NAD(P)-binding Rossmann-like Domain"/>
    <property type="match status" value="1"/>
</dbReference>
<dbReference type="HAMAP" id="MF_00435">
    <property type="entry name" value="IlvC"/>
    <property type="match status" value="1"/>
</dbReference>
<dbReference type="InterPro" id="IPR008927">
    <property type="entry name" value="6-PGluconate_DH-like_C_sf"/>
</dbReference>
<dbReference type="InterPro" id="IPR013023">
    <property type="entry name" value="KARI"/>
</dbReference>
<dbReference type="InterPro" id="IPR000506">
    <property type="entry name" value="KARI_C"/>
</dbReference>
<dbReference type="InterPro" id="IPR013116">
    <property type="entry name" value="KARI_N"/>
</dbReference>
<dbReference type="InterPro" id="IPR014359">
    <property type="entry name" value="KARI_prok"/>
</dbReference>
<dbReference type="InterPro" id="IPR036291">
    <property type="entry name" value="NAD(P)-bd_dom_sf"/>
</dbReference>
<dbReference type="NCBIfam" id="TIGR00465">
    <property type="entry name" value="ilvC"/>
    <property type="match status" value="1"/>
</dbReference>
<dbReference type="NCBIfam" id="NF004017">
    <property type="entry name" value="PRK05479.1"/>
    <property type="match status" value="1"/>
</dbReference>
<dbReference type="NCBIfam" id="NF009940">
    <property type="entry name" value="PRK13403.1"/>
    <property type="match status" value="1"/>
</dbReference>
<dbReference type="PANTHER" id="PTHR21371">
    <property type="entry name" value="KETOL-ACID REDUCTOISOMERASE, MITOCHONDRIAL"/>
    <property type="match status" value="1"/>
</dbReference>
<dbReference type="PANTHER" id="PTHR21371:SF1">
    <property type="entry name" value="KETOL-ACID REDUCTOISOMERASE, MITOCHONDRIAL"/>
    <property type="match status" value="1"/>
</dbReference>
<dbReference type="Pfam" id="PF01450">
    <property type="entry name" value="KARI_C"/>
    <property type="match status" value="1"/>
</dbReference>
<dbReference type="Pfam" id="PF07991">
    <property type="entry name" value="KARI_N"/>
    <property type="match status" value="1"/>
</dbReference>
<dbReference type="PIRSF" id="PIRSF000116">
    <property type="entry name" value="IlvC_gammaproteo"/>
    <property type="match status" value="1"/>
</dbReference>
<dbReference type="SUPFAM" id="SSF48179">
    <property type="entry name" value="6-phosphogluconate dehydrogenase C-terminal domain-like"/>
    <property type="match status" value="1"/>
</dbReference>
<dbReference type="SUPFAM" id="SSF51735">
    <property type="entry name" value="NAD(P)-binding Rossmann-fold domains"/>
    <property type="match status" value="1"/>
</dbReference>
<dbReference type="PROSITE" id="PS51851">
    <property type="entry name" value="KARI_C"/>
    <property type="match status" value="1"/>
</dbReference>
<dbReference type="PROSITE" id="PS51850">
    <property type="entry name" value="KARI_N"/>
    <property type="match status" value="1"/>
</dbReference>
<keyword id="KW-0028">Amino-acid biosynthesis</keyword>
<keyword id="KW-0100">Branched-chain amino acid biosynthesis</keyword>
<keyword id="KW-0460">Magnesium</keyword>
<keyword id="KW-0479">Metal-binding</keyword>
<keyword id="KW-0521">NADP</keyword>
<keyword id="KW-0560">Oxidoreductase</keyword>
<accession>P65152</accession>
<accession>Q99SJ6</accession>
<organism>
    <name type="scientific">Staphylococcus aureus (strain N315)</name>
    <dbReference type="NCBI Taxonomy" id="158879"/>
    <lineage>
        <taxon>Bacteria</taxon>
        <taxon>Bacillati</taxon>
        <taxon>Bacillota</taxon>
        <taxon>Bacilli</taxon>
        <taxon>Bacillales</taxon>
        <taxon>Staphylococcaceae</taxon>
        <taxon>Staphylococcus</taxon>
    </lineage>
</organism>
<gene>
    <name evidence="1" type="primary">ilvC</name>
    <name type="ordered locus">SA1861</name>
</gene>
<reference key="1">
    <citation type="journal article" date="2001" name="Lancet">
        <title>Whole genome sequencing of meticillin-resistant Staphylococcus aureus.</title>
        <authorList>
            <person name="Kuroda M."/>
            <person name="Ohta T."/>
            <person name="Uchiyama I."/>
            <person name="Baba T."/>
            <person name="Yuzawa H."/>
            <person name="Kobayashi I."/>
            <person name="Cui L."/>
            <person name="Oguchi A."/>
            <person name="Aoki K."/>
            <person name="Nagai Y."/>
            <person name="Lian J.-Q."/>
            <person name="Ito T."/>
            <person name="Kanamori M."/>
            <person name="Matsumaru H."/>
            <person name="Maruyama A."/>
            <person name="Murakami H."/>
            <person name="Hosoyama A."/>
            <person name="Mizutani-Ui Y."/>
            <person name="Takahashi N.K."/>
            <person name="Sawano T."/>
            <person name="Inoue R."/>
            <person name="Kaito C."/>
            <person name="Sekimizu K."/>
            <person name="Hirakawa H."/>
            <person name="Kuhara S."/>
            <person name="Goto S."/>
            <person name="Yabuzaki J."/>
            <person name="Kanehisa M."/>
            <person name="Yamashita A."/>
            <person name="Oshima K."/>
            <person name="Furuya K."/>
            <person name="Yoshino C."/>
            <person name="Shiba T."/>
            <person name="Hattori M."/>
            <person name="Ogasawara N."/>
            <person name="Hayashi H."/>
            <person name="Hiramatsu K."/>
        </authorList>
    </citation>
    <scope>NUCLEOTIDE SEQUENCE [LARGE SCALE GENOMIC DNA]</scope>
    <source>
        <strain>N315</strain>
    </source>
</reference>